<name>PYRH_AERPE</name>
<organism>
    <name type="scientific">Aeropyrum pernix (strain ATCC 700893 / DSM 11879 / JCM 9820 / NBRC 100138 / K1)</name>
    <dbReference type="NCBI Taxonomy" id="272557"/>
    <lineage>
        <taxon>Archaea</taxon>
        <taxon>Thermoproteota</taxon>
        <taxon>Thermoprotei</taxon>
        <taxon>Desulfurococcales</taxon>
        <taxon>Desulfurococcaceae</taxon>
        <taxon>Aeropyrum</taxon>
    </lineage>
</organism>
<keyword id="KW-0067">ATP-binding</keyword>
<keyword id="KW-0963">Cytoplasm</keyword>
<keyword id="KW-0418">Kinase</keyword>
<keyword id="KW-0547">Nucleotide-binding</keyword>
<keyword id="KW-0665">Pyrimidine biosynthesis</keyword>
<keyword id="KW-1185">Reference proteome</keyword>
<keyword id="KW-0808">Transferase</keyword>
<evidence type="ECO:0000255" key="1">
    <source>
        <dbReference type="HAMAP-Rule" id="MF_01220"/>
    </source>
</evidence>
<proteinExistence type="inferred from homology"/>
<dbReference type="EC" id="2.7.4.22" evidence="1"/>
<dbReference type="EMBL" id="BA000002">
    <property type="protein sequence ID" value="BAA79356.2"/>
    <property type="molecule type" value="Genomic_DNA"/>
</dbReference>
<dbReference type="PIR" id="H72732">
    <property type="entry name" value="H72732"/>
</dbReference>
<dbReference type="SMR" id="Q9YF40"/>
<dbReference type="STRING" id="272557.APE_0401.1"/>
<dbReference type="EnsemblBacteria" id="BAA79356">
    <property type="protein sequence ID" value="BAA79356"/>
    <property type="gene ID" value="APE_0401.1"/>
</dbReference>
<dbReference type="KEGG" id="ape:APE_0401.1"/>
<dbReference type="eggNOG" id="arCOG00858">
    <property type="taxonomic scope" value="Archaea"/>
</dbReference>
<dbReference type="UniPathway" id="UPA00159">
    <property type="reaction ID" value="UER00275"/>
</dbReference>
<dbReference type="Proteomes" id="UP000002518">
    <property type="component" value="Chromosome"/>
</dbReference>
<dbReference type="GO" id="GO:0005737">
    <property type="term" value="C:cytoplasm"/>
    <property type="evidence" value="ECO:0007669"/>
    <property type="project" value="UniProtKB-SubCell"/>
</dbReference>
<dbReference type="GO" id="GO:0005524">
    <property type="term" value="F:ATP binding"/>
    <property type="evidence" value="ECO:0007669"/>
    <property type="project" value="UniProtKB-KW"/>
</dbReference>
<dbReference type="GO" id="GO:0033862">
    <property type="term" value="F:UMP kinase activity"/>
    <property type="evidence" value="ECO:0007669"/>
    <property type="project" value="UniProtKB-EC"/>
</dbReference>
<dbReference type="GO" id="GO:0044210">
    <property type="term" value="P:'de novo' CTP biosynthetic process"/>
    <property type="evidence" value="ECO:0007669"/>
    <property type="project" value="UniProtKB-UniRule"/>
</dbReference>
<dbReference type="GO" id="GO:0006225">
    <property type="term" value="P:UDP biosynthetic process"/>
    <property type="evidence" value="ECO:0007669"/>
    <property type="project" value="TreeGrafter"/>
</dbReference>
<dbReference type="CDD" id="cd04253">
    <property type="entry name" value="AAK_UMPK-PyrH-Pf"/>
    <property type="match status" value="1"/>
</dbReference>
<dbReference type="Gene3D" id="3.40.1160.10">
    <property type="entry name" value="Acetylglutamate kinase-like"/>
    <property type="match status" value="1"/>
</dbReference>
<dbReference type="HAMAP" id="MF_01220_A">
    <property type="entry name" value="PyrH_A"/>
    <property type="match status" value="1"/>
</dbReference>
<dbReference type="InterPro" id="IPR036393">
    <property type="entry name" value="AceGlu_kinase-like_sf"/>
</dbReference>
<dbReference type="InterPro" id="IPR001048">
    <property type="entry name" value="Asp/Glu/Uridylate_kinase"/>
</dbReference>
<dbReference type="InterPro" id="IPR011817">
    <property type="entry name" value="Uridylate_kinase"/>
</dbReference>
<dbReference type="InterPro" id="IPR011818">
    <property type="entry name" value="Uridylate_kinase_arch/spir"/>
</dbReference>
<dbReference type="NCBIfam" id="TIGR02076">
    <property type="entry name" value="pyrH_arch"/>
    <property type="match status" value="1"/>
</dbReference>
<dbReference type="PANTHER" id="PTHR42833">
    <property type="entry name" value="URIDYLATE KINASE"/>
    <property type="match status" value="1"/>
</dbReference>
<dbReference type="PANTHER" id="PTHR42833:SF4">
    <property type="entry name" value="URIDYLATE KINASE PUMPKIN, CHLOROPLASTIC"/>
    <property type="match status" value="1"/>
</dbReference>
<dbReference type="Pfam" id="PF00696">
    <property type="entry name" value="AA_kinase"/>
    <property type="match status" value="1"/>
</dbReference>
<dbReference type="PIRSF" id="PIRSF005650">
    <property type="entry name" value="Uridylate_kin"/>
    <property type="match status" value="1"/>
</dbReference>
<dbReference type="SUPFAM" id="SSF53633">
    <property type="entry name" value="Carbamate kinase-like"/>
    <property type="match status" value="1"/>
</dbReference>
<comment type="function">
    <text evidence="1">Catalyzes the reversible phosphorylation of UMP to UDP.</text>
</comment>
<comment type="catalytic activity">
    <reaction evidence="1">
        <text>UMP + ATP = UDP + ADP</text>
        <dbReference type="Rhea" id="RHEA:24400"/>
        <dbReference type="ChEBI" id="CHEBI:30616"/>
        <dbReference type="ChEBI" id="CHEBI:57865"/>
        <dbReference type="ChEBI" id="CHEBI:58223"/>
        <dbReference type="ChEBI" id="CHEBI:456216"/>
        <dbReference type="EC" id="2.7.4.22"/>
    </reaction>
</comment>
<comment type="activity regulation">
    <text evidence="1">Inhibited by UTP.</text>
</comment>
<comment type="pathway">
    <text evidence="1">Pyrimidine metabolism; CTP biosynthesis via de novo pathway; UDP from UMP (UMPK route): step 1/1.</text>
</comment>
<comment type="subunit">
    <text evidence="1">Homohexamer.</text>
</comment>
<comment type="subcellular location">
    <subcellularLocation>
        <location evidence="1">Cytoplasm</location>
    </subcellularLocation>
</comment>
<comment type="similarity">
    <text evidence="1">Belongs to the UMP kinase family.</text>
</comment>
<accession>Q9YF40</accession>
<sequence length="225" mass="24202">MESVVVKISGSLVHPPRLDYLTRLRDVLWGLVDGGFRVAVVVGGGGLARSYIDVLRRAGVSEALLDEMGIESSRLNASLLAKLLYPRSQPYPLASLREVLEVFMTGLIPVSGGFQPGQSTNAVAAVIAEALGARTLLNCLKGVEGVYSDEPSTPGARLLRRLTYRQLEDILVKVSSQRAGSYTLWDMVALSVARRSGLRIVFFDCSDPANIWGALKGEKGSIVEG</sequence>
<reference key="1">
    <citation type="journal article" date="1999" name="DNA Res.">
        <title>Complete genome sequence of an aerobic hyper-thermophilic crenarchaeon, Aeropyrum pernix K1.</title>
        <authorList>
            <person name="Kawarabayasi Y."/>
            <person name="Hino Y."/>
            <person name="Horikawa H."/>
            <person name="Yamazaki S."/>
            <person name="Haikawa Y."/>
            <person name="Jin-no K."/>
            <person name="Takahashi M."/>
            <person name="Sekine M."/>
            <person name="Baba S."/>
            <person name="Ankai A."/>
            <person name="Kosugi H."/>
            <person name="Hosoyama A."/>
            <person name="Fukui S."/>
            <person name="Nagai Y."/>
            <person name="Nishijima K."/>
            <person name="Nakazawa H."/>
            <person name="Takamiya M."/>
            <person name="Masuda S."/>
            <person name="Funahashi T."/>
            <person name="Tanaka T."/>
            <person name="Kudoh Y."/>
            <person name="Yamazaki J."/>
            <person name="Kushida N."/>
            <person name="Oguchi A."/>
            <person name="Aoki K."/>
            <person name="Kubota K."/>
            <person name="Nakamura Y."/>
            <person name="Nomura N."/>
            <person name="Sako Y."/>
            <person name="Kikuchi H."/>
        </authorList>
    </citation>
    <scope>NUCLEOTIDE SEQUENCE [LARGE SCALE GENOMIC DNA]</scope>
    <source>
        <strain>ATCC 700893 / DSM 11879 / JCM 9820 / NBRC 100138 / K1</strain>
    </source>
</reference>
<protein>
    <recommendedName>
        <fullName evidence="1">Uridylate kinase</fullName>
        <shortName evidence="1">UK</shortName>
        <ecNumber evidence="1">2.7.4.22</ecNumber>
    </recommendedName>
    <alternativeName>
        <fullName evidence="1">Uridine monophosphate kinase</fullName>
        <shortName evidence="1">UMP kinase</shortName>
        <shortName evidence="1">UMPK</shortName>
    </alternativeName>
</protein>
<feature type="chain" id="PRO_0000143913" description="Uridylate kinase">
    <location>
        <begin position="1"/>
        <end position="225"/>
    </location>
</feature>
<feature type="binding site" evidence="1">
    <location>
        <begin position="7"/>
        <end position="11"/>
    </location>
    <ligand>
        <name>ATP</name>
        <dbReference type="ChEBI" id="CHEBI:30616"/>
    </ligand>
</feature>
<feature type="binding site" evidence="1">
    <location>
        <position position="44"/>
    </location>
    <ligand>
        <name>UMP</name>
        <dbReference type="ChEBI" id="CHEBI:57865"/>
    </ligand>
</feature>
<feature type="binding site" evidence="1">
    <location>
        <position position="45"/>
    </location>
    <ligand>
        <name>ATP</name>
        <dbReference type="ChEBI" id="CHEBI:30616"/>
    </ligand>
</feature>
<feature type="binding site" evidence="1">
    <location>
        <position position="49"/>
    </location>
    <ligand>
        <name>ATP</name>
        <dbReference type="ChEBI" id="CHEBI:30616"/>
    </ligand>
</feature>
<feature type="binding site" evidence="1">
    <location>
        <position position="66"/>
    </location>
    <ligand>
        <name>UMP</name>
        <dbReference type="ChEBI" id="CHEBI:57865"/>
    </ligand>
</feature>
<feature type="binding site" evidence="1">
    <location>
        <begin position="114"/>
        <end position="120"/>
    </location>
    <ligand>
        <name>UMP</name>
        <dbReference type="ChEBI" id="CHEBI:57865"/>
    </ligand>
</feature>
<feature type="binding site" evidence="1">
    <location>
        <position position="147"/>
    </location>
    <ligand>
        <name>ATP</name>
        <dbReference type="ChEBI" id="CHEBI:30616"/>
    </ligand>
</feature>
<feature type="binding site" evidence="1">
    <location>
        <position position="150"/>
    </location>
    <ligand>
        <name>ATP</name>
        <dbReference type="ChEBI" id="CHEBI:30616"/>
    </ligand>
</feature>
<gene>
    <name evidence="1" type="primary">pyrH</name>
    <name type="ordered locus">APE_0401.1</name>
</gene>